<organismHost>
    <name type="scientific">Aves</name>
    <dbReference type="NCBI Taxonomy" id="8782"/>
</organismHost>
<organismHost>
    <name type="scientific">Homo sapiens</name>
    <name type="common">Human</name>
    <dbReference type="NCBI Taxonomy" id="9606"/>
</organismHost>
<organismHost>
    <name type="scientific">Sus scrofa</name>
    <name type="common">Pig</name>
    <dbReference type="NCBI Taxonomy" id="9823"/>
</organismHost>
<evidence type="ECO:0000255" key="1">
    <source>
        <dbReference type="HAMAP-Rule" id="MF_04070"/>
    </source>
</evidence>
<evidence type="ECO:0000256" key="2">
    <source>
        <dbReference type="SAM" id="MobiDB-lite"/>
    </source>
</evidence>
<comment type="function">
    <text evidence="1">Encapsidates the negative strand viral RNA, protecting it from nucleases. The encapsidated genomic RNA is termed the ribonucleoprotein (RNP) and serves as template for transcription and replication. The RNP needs to be localized in the host nucleus to start an infectious cycle, but is too large to diffuse through the nuclear pore complex. NP comprises at least 2 nuclear localization signals that are responsible for the active RNP import into the nucleus through cellular importin alpha/beta pathway. Later in the infection, nclear export of RNPs are mediated through viral proteins NEP interacting with M1 which binds nucleoproteins. It is possible that nucleoprotein binds directly host exportin-1/XPO1 and plays an active role in RNPs nuclear export. M1 interaction with RNP seems to hide nucleoprotein's nuclear localization signals. Soon after a virion infects a new cell, M1 dissociates from the RNP under acidification of the virion driven by M2 protein. Dissociation of M1 from RNP unmasks nucleoprotein's nuclear localization signals, targeting the RNP to the nucleus.</text>
</comment>
<comment type="subunit">
    <text evidence="1">Homomultimerizes to form the nucleocapsid. May bind host exportin-1/XPO1. Binds to viral genomic RNA. Protein-RNA contacts are mediated by a combination of electrostatic interactions between positively charged residues and the phosphate backbone and planar interactions between aromatic side chains and bases.</text>
</comment>
<comment type="subcellular location">
    <subcellularLocation>
        <location evidence="1">Virion</location>
    </subcellularLocation>
    <subcellularLocation>
        <location evidence="1">Host nucleus</location>
    </subcellularLocation>
</comment>
<comment type="PTM">
    <text evidence="1">Late in virus-infected cells, may be cleaved from a 56-kDa protein to a 53-kDa protein by a cellular caspase. This cleavage might be a marker for the onset of apoptosis in infected cells or have a specific function in virus host interaction.</text>
</comment>
<comment type="similarity">
    <text evidence="1">Belongs to the influenza viruses nucleoprotein family.</text>
</comment>
<reference key="1">
    <citation type="journal article" date="1991" name="J. Virol.">
        <title>Evolution of influenza A virus nucleoprotein genes: implications for the origins of H1N1 human and classical swine viruses.</title>
        <authorList>
            <person name="Gorman O.T."/>
            <person name="Bean W.J."/>
            <person name="Kawaoka Y."/>
            <person name="Donatelli I."/>
            <person name="Guo Y."/>
            <person name="Webster R.G."/>
        </authorList>
    </citation>
    <scope>NUCLEOTIDE SEQUENCE [GENOMIC RNA]</scope>
</reference>
<accession>P26087</accession>
<feature type="chain" id="PRO_0000079135" description="Nucleoprotein">
    <location>
        <begin position="1"/>
        <end position="498"/>
    </location>
</feature>
<feature type="region of interest" description="Disordered" evidence="2">
    <location>
        <begin position="1"/>
        <end position="22"/>
    </location>
</feature>
<feature type="short sequence motif" description="Unconventional nuclear localization signal" evidence="1">
    <location>
        <begin position="1"/>
        <end position="18"/>
    </location>
</feature>
<feature type="short sequence motif" description="Bipartite nuclear localization signal" evidence="1">
    <location>
        <begin position="198"/>
        <end position="216"/>
    </location>
</feature>
<feature type="compositionally biased region" description="Basic and acidic residues" evidence="2">
    <location>
        <begin position="8"/>
        <end position="22"/>
    </location>
</feature>
<keyword id="KW-0167">Capsid protein</keyword>
<keyword id="KW-1139">Helical capsid protein</keyword>
<keyword id="KW-1048">Host nucleus</keyword>
<keyword id="KW-0945">Host-virus interaction</keyword>
<keyword id="KW-0687">Ribonucleoprotein</keyword>
<keyword id="KW-0694">RNA-binding</keyword>
<keyword id="KW-0543">Viral nucleoprotein</keyword>
<keyword id="KW-1163">Viral penetration into host nucleus</keyword>
<keyword id="KW-0946">Virion</keyword>
<keyword id="KW-1160">Virus entry into host cell</keyword>
<organism>
    <name type="scientific">Influenza A virus (strain A/Swine/Ontario/2/1981 H1N1)</name>
    <dbReference type="NCBI Taxonomy" id="384501"/>
    <lineage>
        <taxon>Viruses</taxon>
        <taxon>Riboviria</taxon>
        <taxon>Orthornavirae</taxon>
        <taxon>Negarnaviricota</taxon>
        <taxon>Polyploviricotina</taxon>
        <taxon>Insthoviricetes</taxon>
        <taxon>Articulavirales</taxon>
        <taxon>Orthomyxoviridae</taxon>
        <taxon>Alphainfluenzavirus</taxon>
        <taxon>Alphainfluenzavirus influenzae</taxon>
        <taxon>Influenza A virus</taxon>
    </lineage>
</organism>
<dbReference type="EMBL" id="M63767">
    <property type="protein sequence ID" value="AAA52266.1"/>
    <property type="molecule type" value="Genomic_RNA"/>
</dbReference>
<dbReference type="SMR" id="P26087"/>
<dbReference type="GO" id="GO:0019029">
    <property type="term" value="C:helical viral capsid"/>
    <property type="evidence" value="ECO:0007669"/>
    <property type="project" value="UniProtKB-UniRule"/>
</dbReference>
<dbReference type="GO" id="GO:0043657">
    <property type="term" value="C:host cell"/>
    <property type="evidence" value="ECO:0007669"/>
    <property type="project" value="GOC"/>
</dbReference>
<dbReference type="GO" id="GO:0042025">
    <property type="term" value="C:host cell nucleus"/>
    <property type="evidence" value="ECO:0007669"/>
    <property type="project" value="UniProtKB-SubCell"/>
</dbReference>
<dbReference type="GO" id="GO:1990904">
    <property type="term" value="C:ribonucleoprotein complex"/>
    <property type="evidence" value="ECO:0007669"/>
    <property type="project" value="UniProtKB-KW"/>
</dbReference>
<dbReference type="GO" id="GO:0019013">
    <property type="term" value="C:viral nucleocapsid"/>
    <property type="evidence" value="ECO:0007669"/>
    <property type="project" value="UniProtKB-UniRule"/>
</dbReference>
<dbReference type="GO" id="GO:0003723">
    <property type="term" value="F:RNA binding"/>
    <property type="evidence" value="ECO:0007669"/>
    <property type="project" value="UniProtKB-UniRule"/>
</dbReference>
<dbReference type="GO" id="GO:0005198">
    <property type="term" value="F:structural molecule activity"/>
    <property type="evidence" value="ECO:0007669"/>
    <property type="project" value="UniProtKB-UniRule"/>
</dbReference>
<dbReference type="GO" id="GO:0046718">
    <property type="term" value="P:symbiont entry into host cell"/>
    <property type="evidence" value="ECO:0007669"/>
    <property type="project" value="UniProtKB-KW"/>
</dbReference>
<dbReference type="GO" id="GO:0075732">
    <property type="term" value="P:viral penetration into host nucleus"/>
    <property type="evidence" value="ECO:0007669"/>
    <property type="project" value="UniProtKB-UniRule"/>
</dbReference>
<dbReference type="HAMAP" id="MF_04070">
    <property type="entry name" value="INFV_NCAP"/>
    <property type="match status" value="1"/>
</dbReference>
<dbReference type="InterPro" id="IPR002141">
    <property type="entry name" value="Flu_NP"/>
</dbReference>
<dbReference type="Pfam" id="PF00506">
    <property type="entry name" value="Flu_NP"/>
    <property type="match status" value="1"/>
</dbReference>
<dbReference type="SUPFAM" id="SSF161003">
    <property type="entry name" value="flu NP-like"/>
    <property type="match status" value="1"/>
</dbReference>
<gene>
    <name evidence="1" type="primary">NP</name>
</gene>
<protein>
    <recommendedName>
        <fullName evidence="1">Nucleoprotein</fullName>
    </recommendedName>
    <alternativeName>
        <fullName evidence="1">Nucleocapsid protein</fullName>
        <shortName evidence="1">Protein N</shortName>
    </alternativeName>
</protein>
<sequence length="498" mass="56043">MASQGTKRSYEQMETGGERQDATEIRASVGRMIGGIGRFYIQMCTELKLSDYEGRLIQNSITIERMVLSAFDERRNKYLEEHPSAGKDPKKTGGPIYRRVDGKWMRELILYDKEEIRRVWRQANNGEDATAGLTHIMIWHSNLNDATYQRTRALVRTGMDPRMCSLMQGSTLPRRSGAAGAAVKGVGTIAMELIRMIKRGINDRNFWRGENGRRTRIAYERMCNILKGKFQTAAQRAMMDQVRESRNPGNAEIEDLIFLARSALILRGSVAHKSCLPACVYGLAVASGHDFEREGYSLVGIDPFKLLQNSQVFSLIRPNENPAHKSQLVWMACHSAAFEDLRVSGFIRGKKVVPRGKLSTRGVQIASNENVEAMDSSTLELRSRYWAIRTRSGGNTNQQKASAGQISVQPTFSVQRNLPFERATVMAAFIGNNEGRTSDMRIEIIRMMESAKPEDLSFQGRGVFELSDEKATNPIVPSFDMNNEGSYFFGDNAEEYDN</sequence>
<proteinExistence type="inferred from homology"/>
<name>NCAP_I81A4</name>